<sequence>MAIERTLSIIKPDAVAKNVIGQIYARFEAAGLKIVAAKMVHLSRGEAEQFYAVHKERPFFKDLVDFMVSGPVMIQALEGENAIAKNRDLMGATDPKKAEKGTIRADFADSIDANAVHGSDAAETAAVEVAFFFPGMNVYSR</sequence>
<organism>
    <name type="scientific">Cupriavidus taiwanensis (strain DSM 17343 / BCRC 17206 / CCUG 44338 / CIP 107171 / LMG 19424 / R1)</name>
    <name type="common">Ralstonia taiwanensis (strain LMG 19424)</name>
    <dbReference type="NCBI Taxonomy" id="977880"/>
    <lineage>
        <taxon>Bacteria</taxon>
        <taxon>Pseudomonadati</taxon>
        <taxon>Pseudomonadota</taxon>
        <taxon>Betaproteobacteria</taxon>
        <taxon>Burkholderiales</taxon>
        <taxon>Burkholderiaceae</taxon>
        <taxon>Cupriavidus</taxon>
    </lineage>
</organism>
<dbReference type="EC" id="2.7.4.6" evidence="1"/>
<dbReference type="EMBL" id="CU633749">
    <property type="protein sequence ID" value="CAQ69854.1"/>
    <property type="molecule type" value="Genomic_DNA"/>
</dbReference>
<dbReference type="RefSeq" id="WP_012353167.1">
    <property type="nucleotide sequence ID" value="NC_010528.1"/>
</dbReference>
<dbReference type="SMR" id="B3R1K6"/>
<dbReference type="GeneID" id="29761447"/>
<dbReference type="KEGG" id="cti:RALTA_A1913"/>
<dbReference type="eggNOG" id="COG0105">
    <property type="taxonomic scope" value="Bacteria"/>
</dbReference>
<dbReference type="HOGENOM" id="CLU_060216_8_1_4"/>
<dbReference type="BioCyc" id="CTAI977880:RALTA_RS09225-MONOMER"/>
<dbReference type="Proteomes" id="UP000001692">
    <property type="component" value="Chromosome 1"/>
</dbReference>
<dbReference type="GO" id="GO:0005737">
    <property type="term" value="C:cytoplasm"/>
    <property type="evidence" value="ECO:0007669"/>
    <property type="project" value="UniProtKB-SubCell"/>
</dbReference>
<dbReference type="GO" id="GO:0005524">
    <property type="term" value="F:ATP binding"/>
    <property type="evidence" value="ECO:0007669"/>
    <property type="project" value="UniProtKB-UniRule"/>
</dbReference>
<dbReference type="GO" id="GO:0046872">
    <property type="term" value="F:metal ion binding"/>
    <property type="evidence" value="ECO:0007669"/>
    <property type="project" value="UniProtKB-KW"/>
</dbReference>
<dbReference type="GO" id="GO:0004550">
    <property type="term" value="F:nucleoside diphosphate kinase activity"/>
    <property type="evidence" value="ECO:0007669"/>
    <property type="project" value="UniProtKB-UniRule"/>
</dbReference>
<dbReference type="GO" id="GO:0006241">
    <property type="term" value="P:CTP biosynthetic process"/>
    <property type="evidence" value="ECO:0007669"/>
    <property type="project" value="UniProtKB-UniRule"/>
</dbReference>
<dbReference type="GO" id="GO:0006183">
    <property type="term" value="P:GTP biosynthetic process"/>
    <property type="evidence" value="ECO:0007669"/>
    <property type="project" value="UniProtKB-UniRule"/>
</dbReference>
<dbReference type="GO" id="GO:0006228">
    <property type="term" value="P:UTP biosynthetic process"/>
    <property type="evidence" value="ECO:0007669"/>
    <property type="project" value="UniProtKB-UniRule"/>
</dbReference>
<dbReference type="CDD" id="cd04413">
    <property type="entry name" value="NDPk_I"/>
    <property type="match status" value="1"/>
</dbReference>
<dbReference type="FunFam" id="3.30.70.141:FF:000001">
    <property type="entry name" value="Nucleoside diphosphate kinase"/>
    <property type="match status" value="1"/>
</dbReference>
<dbReference type="Gene3D" id="3.30.70.141">
    <property type="entry name" value="Nucleoside diphosphate kinase-like domain"/>
    <property type="match status" value="1"/>
</dbReference>
<dbReference type="HAMAP" id="MF_00451">
    <property type="entry name" value="NDP_kinase"/>
    <property type="match status" value="1"/>
</dbReference>
<dbReference type="InterPro" id="IPR034907">
    <property type="entry name" value="NDK-like_dom"/>
</dbReference>
<dbReference type="InterPro" id="IPR036850">
    <property type="entry name" value="NDK-like_dom_sf"/>
</dbReference>
<dbReference type="InterPro" id="IPR001564">
    <property type="entry name" value="Nucleoside_diP_kinase"/>
</dbReference>
<dbReference type="NCBIfam" id="NF001908">
    <property type="entry name" value="PRK00668.1"/>
    <property type="match status" value="1"/>
</dbReference>
<dbReference type="PANTHER" id="PTHR46161">
    <property type="entry name" value="NUCLEOSIDE DIPHOSPHATE KINASE"/>
    <property type="match status" value="1"/>
</dbReference>
<dbReference type="PANTHER" id="PTHR46161:SF3">
    <property type="entry name" value="NUCLEOSIDE DIPHOSPHATE KINASE DDB_G0292928-RELATED"/>
    <property type="match status" value="1"/>
</dbReference>
<dbReference type="Pfam" id="PF00334">
    <property type="entry name" value="NDK"/>
    <property type="match status" value="1"/>
</dbReference>
<dbReference type="PRINTS" id="PR01243">
    <property type="entry name" value="NUCDPKINASE"/>
</dbReference>
<dbReference type="SMART" id="SM00562">
    <property type="entry name" value="NDK"/>
    <property type="match status" value="1"/>
</dbReference>
<dbReference type="SUPFAM" id="SSF54919">
    <property type="entry name" value="Nucleoside diphosphate kinase, NDK"/>
    <property type="match status" value="1"/>
</dbReference>
<dbReference type="PROSITE" id="PS51374">
    <property type="entry name" value="NDPK_LIKE"/>
    <property type="match status" value="1"/>
</dbReference>
<reference key="1">
    <citation type="journal article" date="2008" name="Genome Res.">
        <title>Genome sequence of the beta-rhizobium Cupriavidus taiwanensis and comparative genomics of rhizobia.</title>
        <authorList>
            <person name="Amadou C."/>
            <person name="Pascal G."/>
            <person name="Mangenot S."/>
            <person name="Glew M."/>
            <person name="Bontemps C."/>
            <person name="Capela D."/>
            <person name="Carrere S."/>
            <person name="Cruveiller S."/>
            <person name="Dossat C."/>
            <person name="Lajus A."/>
            <person name="Marchetti M."/>
            <person name="Poinsot V."/>
            <person name="Rouy Z."/>
            <person name="Servin B."/>
            <person name="Saad M."/>
            <person name="Schenowitz C."/>
            <person name="Barbe V."/>
            <person name="Batut J."/>
            <person name="Medigue C."/>
            <person name="Masson-Boivin C."/>
        </authorList>
    </citation>
    <scope>NUCLEOTIDE SEQUENCE [LARGE SCALE GENOMIC DNA]</scope>
    <source>
        <strain>DSM 17343 / BCRC 17206 / CCUG 44338 / CIP 107171 / LMG 19424 / R1</strain>
    </source>
</reference>
<name>NDK_CUPTR</name>
<keyword id="KW-0067">ATP-binding</keyword>
<keyword id="KW-0963">Cytoplasm</keyword>
<keyword id="KW-0418">Kinase</keyword>
<keyword id="KW-0460">Magnesium</keyword>
<keyword id="KW-0479">Metal-binding</keyword>
<keyword id="KW-0546">Nucleotide metabolism</keyword>
<keyword id="KW-0547">Nucleotide-binding</keyword>
<keyword id="KW-0597">Phosphoprotein</keyword>
<keyword id="KW-0808">Transferase</keyword>
<comment type="function">
    <text evidence="1">Major role in the synthesis of nucleoside triphosphates other than ATP. The ATP gamma phosphate is transferred to the NDP beta phosphate via a ping-pong mechanism, using a phosphorylated active-site intermediate.</text>
</comment>
<comment type="catalytic activity">
    <reaction evidence="1">
        <text>a 2'-deoxyribonucleoside 5'-diphosphate + ATP = a 2'-deoxyribonucleoside 5'-triphosphate + ADP</text>
        <dbReference type="Rhea" id="RHEA:44640"/>
        <dbReference type="ChEBI" id="CHEBI:30616"/>
        <dbReference type="ChEBI" id="CHEBI:61560"/>
        <dbReference type="ChEBI" id="CHEBI:73316"/>
        <dbReference type="ChEBI" id="CHEBI:456216"/>
        <dbReference type="EC" id="2.7.4.6"/>
    </reaction>
</comment>
<comment type="catalytic activity">
    <reaction evidence="1">
        <text>a ribonucleoside 5'-diphosphate + ATP = a ribonucleoside 5'-triphosphate + ADP</text>
        <dbReference type="Rhea" id="RHEA:18113"/>
        <dbReference type="ChEBI" id="CHEBI:30616"/>
        <dbReference type="ChEBI" id="CHEBI:57930"/>
        <dbReference type="ChEBI" id="CHEBI:61557"/>
        <dbReference type="ChEBI" id="CHEBI:456216"/>
        <dbReference type="EC" id="2.7.4.6"/>
    </reaction>
</comment>
<comment type="cofactor">
    <cofactor evidence="1">
        <name>Mg(2+)</name>
        <dbReference type="ChEBI" id="CHEBI:18420"/>
    </cofactor>
</comment>
<comment type="subunit">
    <text evidence="1">Homotetramer.</text>
</comment>
<comment type="subcellular location">
    <subcellularLocation>
        <location evidence="1">Cytoplasm</location>
    </subcellularLocation>
</comment>
<comment type="similarity">
    <text evidence="1">Belongs to the NDK family.</text>
</comment>
<proteinExistence type="inferred from homology"/>
<protein>
    <recommendedName>
        <fullName evidence="1">Nucleoside diphosphate kinase</fullName>
        <shortName evidence="1">NDK</shortName>
        <shortName evidence="1">NDP kinase</shortName>
        <ecNumber evidence="1">2.7.4.6</ecNumber>
    </recommendedName>
    <alternativeName>
        <fullName evidence="1">Nucleoside-2-P kinase</fullName>
    </alternativeName>
</protein>
<evidence type="ECO:0000255" key="1">
    <source>
        <dbReference type="HAMAP-Rule" id="MF_00451"/>
    </source>
</evidence>
<accession>B3R1K6</accession>
<gene>
    <name evidence="1" type="primary">ndk</name>
    <name type="ordered locus">RALTA_A1913</name>
</gene>
<feature type="chain" id="PRO_1000124952" description="Nucleoside diphosphate kinase">
    <location>
        <begin position="1"/>
        <end position="141"/>
    </location>
</feature>
<feature type="active site" description="Pros-phosphohistidine intermediate" evidence="1">
    <location>
        <position position="117"/>
    </location>
</feature>
<feature type="binding site" evidence="1">
    <location>
        <position position="11"/>
    </location>
    <ligand>
        <name>ATP</name>
        <dbReference type="ChEBI" id="CHEBI:30616"/>
    </ligand>
</feature>
<feature type="binding site" evidence="1">
    <location>
        <position position="59"/>
    </location>
    <ligand>
        <name>ATP</name>
        <dbReference type="ChEBI" id="CHEBI:30616"/>
    </ligand>
</feature>
<feature type="binding site" evidence="1">
    <location>
        <position position="87"/>
    </location>
    <ligand>
        <name>ATP</name>
        <dbReference type="ChEBI" id="CHEBI:30616"/>
    </ligand>
</feature>
<feature type="binding site" evidence="1">
    <location>
        <position position="93"/>
    </location>
    <ligand>
        <name>ATP</name>
        <dbReference type="ChEBI" id="CHEBI:30616"/>
    </ligand>
</feature>
<feature type="binding site" evidence="1">
    <location>
        <position position="104"/>
    </location>
    <ligand>
        <name>ATP</name>
        <dbReference type="ChEBI" id="CHEBI:30616"/>
    </ligand>
</feature>
<feature type="binding site" evidence="1">
    <location>
        <position position="114"/>
    </location>
    <ligand>
        <name>ATP</name>
        <dbReference type="ChEBI" id="CHEBI:30616"/>
    </ligand>
</feature>